<comment type="function">
    <text evidence="1">Participates actively in the response to hyperosmotic and heat shock by preventing the aggregation of stress-denatured proteins and by disaggregating proteins, also in an autonomous, DnaK-independent fashion. Unfolded proteins bind initially to DnaJ; upon interaction with the DnaJ-bound protein, DnaK hydrolyzes its bound ATP, resulting in the formation of a stable complex. GrpE releases ADP from DnaK; ATP binding to DnaK triggers the release of the substrate protein, thus completing the reaction cycle. Several rounds of ATP-dependent interactions between DnaJ, DnaK and GrpE are required for fully efficient folding. Also involved, together with DnaK and GrpE, in the DNA replication of plasmids through activation of initiation proteins.</text>
</comment>
<comment type="cofactor">
    <cofactor evidence="1">
        <name>Zn(2+)</name>
        <dbReference type="ChEBI" id="CHEBI:29105"/>
    </cofactor>
    <text evidence="1">Binds 2 Zn(2+) ions per monomer.</text>
</comment>
<comment type="subunit">
    <text evidence="1">Homodimer.</text>
</comment>
<comment type="subcellular location">
    <subcellularLocation>
        <location evidence="1">Cytoplasm</location>
    </subcellularLocation>
</comment>
<comment type="domain">
    <text evidence="1">The J domain is necessary and sufficient to stimulate DnaK ATPase activity. Zinc center 1 plays an important role in the autonomous, DnaK-independent chaperone activity of DnaJ. Zinc center 2 is essential for interaction with DnaK and for DnaJ activity.</text>
</comment>
<comment type="similarity">
    <text evidence="1">Belongs to the DnaJ family.</text>
</comment>
<proteinExistence type="inferred from homology"/>
<keyword id="KW-0143">Chaperone</keyword>
<keyword id="KW-0963">Cytoplasm</keyword>
<keyword id="KW-0235">DNA replication</keyword>
<keyword id="KW-0479">Metal-binding</keyword>
<keyword id="KW-0677">Repeat</keyword>
<keyword id="KW-0346">Stress response</keyword>
<keyword id="KW-0862">Zinc</keyword>
<keyword id="KW-0863">Zinc-finger</keyword>
<organism>
    <name type="scientific">Cupriavidus taiwanensis (strain DSM 17343 / BCRC 17206 / CCUG 44338 / CIP 107171 / LMG 19424 / R1)</name>
    <name type="common">Ralstonia taiwanensis (strain LMG 19424)</name>
    <dbReference type="NCBI Taxonomy" id="977880"/>
    <lineage>
        <taxon>Bacteria</taxon>
        <taxon>Pseudomonadati</taxon>
        <taxon>Pseudomonadota</taxon>
        <taxon>Betaproteobacteria</taxon>
        <taxon>Burkholderiales</taxon>
        <taxon>Burkholderiaceae</taxon>
        <taxon>Cupriavidus</taxon>
    </lineage>
</organism>
<dbReference type="EMBL" id="CU633749">
    <property type="protein sequence ID" value="CAQ70494.1"/>
    <property type="molecule type" value="Genomic_DNA"/>
</dbReference>
<dbReference type="RefSeq" id="WP_012353790.1">
    <property type="nucleotide sequence ID" value="NC_010528.1"/>
</dbReference>
<dbReference type="SMR" id="B3R6G6"/>
<dbReference type="GeneID" id="29761325"/>
<dbReference type="KEGG" id="cti:RALTA_A2563"/>
<dbReference type="eggNOG" id="COG0484">
    <property type="taxonomic scope" value="Bacteria"/>
</dbReference>
<dbReference type="HOGENOM" id="CLU_017633_0_7_4"/>
<dbReference type="BioCyc" id="CTAI977880:RALTA_RS12465-MONOMER"/>
<dbReference type="Proteomes" id="UP000001692">
    <property type="component" value="Chromosome 1"/>
</dbReference>
<dbReference type="GO" id="GO:0005737">
    <property type="term" value="C:cytoplasm"/>
    <property type="evidence" value="ECO:0007669"/>
    <property type="project" value="UniProtKB-SubCell"/>
</dbReference>
<dbReference type="GO" id="GO:0005524">
    <property type="term" value="F:ATP binding"/>
    <property type="evidence" value="ECO:0007669"/>
    <property type="project" value="InterPro"/>
</dbReference>
<dbReference type="GO" id="GO:0031072">
    <property type="term" value="F:heat shock protein binding"/>
    <property type="evidence" value="ECO:0007669"/>
    <property type="project" value="InterPro"/>
</dbReference>
<dbReference type="GO" id="GO:0051082">
    <property type="term" value="F:unfolded protein binding"/>
    <property type="evidence" value="ECO:0007669"/>
    <property type="project" value="UniProtKB-UniRule"/>
</dbReference>
<dbReference type="GO" id="GO:0008270">
    <property type="term" value="F:zinc ion binding"/>
    <property type="evidence" value="ECO:0007669"/>
    <property type="project" value="UniProtKB-UniRule"/>
</dbReference>
<dbReference type="GO" id="GO:0051085">
    <property type="term" value="P:chaperone cofactor-dependent protein refolding"/>
    <property type="evidence" value="ECO:0007669"/>
    <property type="project" value="TreeGrafter"/>
</dbReference>
<dbReference type="GO" id="GO:0006260">
    <property type="term" value="P:DNA replication"/>
    <property type="evidence" value="ECO:0007669"/>
    <property type="project" value="UniProtKB-KW"/>
</dbReference>
<dbReference type="GO" id="GO:0042026">
    <property type="term" value="P:protein refolding"/>
    <property type="evidence" value="ECO:0007669"/>
    <property type="project" value="TreeGrafter"/>
</dbReference>
<dbReference type="GO" id="GO:0009408">
    <property type="term" value="P:response to heat"/>
    <property type="evidence" value="ECO:0007669"/>
    <property type="project" value="InterPro"/>
</dbReference>
<dbReference type="CDD" id="cd06257">
    <property type="entry name" value="DnaJ"/>
    <property type="match status" value="1"/>
</dbReference>
<dbReference type="CDD" id="cd10747">
    <property type="entry name" value="DnaJ_C"/>
    <property type="match status" value="1"/>
</dbReference>
<dbReference type="FunFam" id="1.10.287.110:FF:000031">
    <property type="entry name" value="Molecular chaperone DnaJ"/>
    <property type="match status" value="1"/>
</dbReference>
<dbReference type="FunFam" id="2.10.230.10:FF:000002">
    <property type="entry name" value="Molecular chaperone DnaJ"/>
    <property type="match status" value="1"/>
</dbReference>
<dbReference type="FunFam" id="2.60.260.20:FF:000004">
    <property type="entry name" value="Molecular chaperone DnaJ"/>
    <property type="match status" value="1"/>
</dbReference>
<dbReference type="Gene3D" id="1.10.287.110">
    <property type="entry name" value="DnaJ domain"/>
    <property type="match status" value="1"/>
</dbReference>
<dbReference type="Gene3D" id="2.10.230.10">
    <property type="entry name" value="Heat shock protein DnaJ, cysteine-rich domain"/>
    <property type="match status" value="1"/>
</dbReference>
<dbReference type="Gene3D" id="2.60.260.20">
    <property type="entry name" value="Urease metallochaperone UreE, N-terminal domain"/>
    <property type="match status" value="2"/>
</dbReference>
<dbReference type="HAMAP" id="MF_01152">
    <property type="entry name" value="DnaJ"/>
    <property type="match status" value="1"/>
</dbReference>
<dbReference type="InterPro" id="IPR012724">
    <property type="entry name" value="DnaJ"/>
</dbReference>
<dbReference type="InterPro" id="IPR002939">
    <property type="entry name" value="DnaJ_C"/>
</dbReference>
<dbReference type="InterPro" id="IPR001623">
    <property type="entry name" value="DnaJ_domain"/>
</dbReference>
<dbReference type="InterPro" id="IPR018253">
    <property type="entry name" value="DnaJ_domain_CS"/>
</dbReference>
<dbReference type="InterPro" id="IPR008971">
    <property type="entry name" value="HSP40/DnaJ_pept-bd"/>
</dbReference>
<dbReference type="InterPro" id="IPR001305">
    <property type="entry name" value="HSP_DnaJ_Cys-rich_dom"/>
</dbReference>
<dbReference type="InterPro" id="IPR036410">
    <property type="entry name" value="HSP_DnaJ_Cys-rich_dom_sf"/>
</dbReference>
<dbReference type="InterPro" id="IPR036869">
    <property type="entry name" value="J_dom_sf"/>
</dbReference>
<dbReference type="NCBIfam" id="TIGR02349">
    <property type="entry name" value="DnaJ_bact"/>
    <property type="match status" value="1"/>
</dbReference>
<dbReference type="NCBIfam" id="NF008035">
    <property type="entry name" value="PRK10767.1"/>
    <property type="match status" value="1"/>
</dbReference>
<dbReference type="PANTHER" id="PTHR43096:SF48">
    <property type="entry name" value="CHAPERONE PROTEIN DNAJ"/>
    <property type="match status" value="1"/>
</dbReference>
<dbReference type="PANTHER" id="PTHR43096">
    <property type="entry name" value="DNAJ HOMOLOG 1, MITOCHONDRIAL-RELATED"/>
    <property type="match status" value="1"/>
</dbReference>
<dbReference type="Pfam" id="PF00226">
    <property type="entry name" value="DnaJ"/>
    <property type="match status" value="1"/>
</dbReference>
<dbReference type="Pfam" id="PF01556">
    <property type="entry name" value="DnaJ_C"/>
    <property type="match status" value="1"/>
</dbReference>
<dbReference type="Pfam" id="PF00684">
    <property type="entry name" value="DnaJ_CXXCXGXG"/>
    <property type="match status" value="1"/>
</dbReference>
<dbReference type="PRINTS" id="PR00625">
    <property type="entry name" value="JDOMAIN"/>
</dbReference>
<dbReference type="SMART" id="SM00271">
    <property type="entry name" value="DnaJ"/>
    <property type="match status" value="1"/>
</dbReference>
<dbReference type="SUPFAM" id="SSF46565">
    <property type="entry name" value="Chaperone J-domain"/>
    <property type="match status" value="1"/>
</dbReference>
<dbReference type="SUPFAM" id="SSF57938">
    <property type="entry name" value="DnaJ/Hsp40 cysteine-rich domain"/>
    <property type="match status" value="1"/>
</dbReference>
<dbReference type="SUPFAM" id="SSF49493">
    <property type="entry name" value="HSP40/DnaJ peptide-binding domain"/>
    <property type="match status" value="2"/>
</dbReference>
<dbReference type="PROSITE" id="PS00636">
    <property type="entry name" value="DNAJ_1"/>
    <property type="match status" value="1"/>
</dbReference>
<dbReference type="PROSITE" id="PS50076">
    <property type="entry name" value="DNAJ_2"/>
    <property type="match status" value="1"/>
</dbReference>
<dbReference type="PROSITE" id="PS51188">
    <property type="entry name" value="ZF_CR"/>
    <property type="match status" value="1"/>
</dbReference>
<accession>B3R6G6</accession>
<gene>
    <name evidence="1" type="primary">dnaJ</name>
    <name type="ordered locus">RALTA_A2563</name>
</gene>
<sequence>MAKRDYYEVLGVGKNASDDEIKKAYRKLAMKFHPDRNPDSKDAEEKFKEAKEAYEMLSDPEKKAAYDQYGHAGVDPNMAGGFGGAQGYGGFAEAFGDIFGDIFGQGGGGRRGGGPQAYRGADLRYSMEISLEQAAHGHEAQIRVPHWDDCDHCHGNGAEPGSSVETCPTCHGAGQVRVSQGFFTMQQTCPKCHGSGKFIPKPCTKCHGQGKLKSQKTLEVKIPAGIDEGMRIRSSGNGEPGINGGPPGDLYVEVHIKPHAVFERDGDDLHCQMPISFATAALGGDLEVPTLSGKATFPVPEATQSGKTFRLRGKGIKGVRSGYPGDLYVHVNVETPVKLTEAQKEMLRQFDRSVHEGGSRHSPQETSWLDKVKSFFS</sequence>
<protein>
    <recommendedName>
        <fullName evidence="1">Chaperone protein DnaJ</fullName>
    </recommendedName>
</protein>
<name>DNAJ_CUPTR</name>
<feature type="chain" id="PRO_1000137675" description="Chaperone protein DnaJ">
    <location>
        <begin position="1"/>
        <end position="377"/>
    </location>
</feature>
<feature type="domain" description="J" evidence="1">
    <location>
        <begin position="5"/>
        <end position="70"/>
    </location>
</feature>
<feature type="repeat" description="CXXCXGXG motif">
    <location>
        <begin position="150"/>
        <end position="157"/>
    </location>
</feature>
<feature type="repeat" description="CXXCXGXG motif">
    <location>
        <begin position="167"/>
        <end position="174"/>
    </location>
</feature>
<feature type="repeat" description="CXXCXGXG motif">
    <location>
        <begin position="189"/>
        <end position="196"/>
    </location>
</feature>
<feature type="repeat" description="CXXCXGXG motif">
    <location>
        <begin position="203"/>
        <end position="210"/>
    </location>
</feature>
<feature type="zinc finger region" description="CR-type" evidence="1">
    <location>
        <begin position="137"/>
        <end position="215"/>
    </location>
</feature>
<feature type="binding site" evidence="1">
    <location>
        <position position="150"/>
    </location>
    <ligand>
        <name>Zn(2+)</name>
        <dbReference type="ChEBI" id="CHEBI:29105"/>
        <label>1</label>
    </ligand>
</feature>
<feature type="binding site" evidence="1">
    <location>
        <position position="153"/>
    </location>
    <ligand>
        <name>Zn(2+)</name>
        <dbReference type="ChEBI" id="CHEBI:29105"/>
        <label>1</label>
    </ligand>
</feature>
<feature type="binding site" evidence="1">
    <location>
        <position position="167"/>
    </location>
    <ligand>
        <name>Zn(2+)</name>
        <dbReference type="ChEBI" id="CHEBI:29105"/>
        <label>2</label>
    </ligand>
</feature>
<feature type="binding site" evidence="1">
    <location>
        <position position="170"/>
    </location>
    <ligand>
        <name>Zn(2+)</name>
        <dbReference type="ChEBI" id="CHEBI:29105"/>
        <label>2</label>
    </ligand>
</feature>
<feature type="binding site" evidence="1">
    <location>
        <position position="189"/>
    </location>
    <ligand>
        <name>Zn(2+)</name>
        <dbReference type="ChEBI" id="CHEBI:29105"/>
        <label>2</label>
    </ligand>
</feature>
<feature type="binding site" evidence="1">
    <location>
        <position position="192"/>
    </location>
    <ligand>
        <name>Zn(2+)</name>
        <dbReference type="ChEBI" id="CHEBI:29105"/>
        <label>2</label>
    </ligand>
</feature>
<feature type="binding site" evidence="1">
    <location>
        <position position="203"/>
    </location>
    <ligand>
        <name>Zn(2+)</name>
        <dbReference type="ChEBI" id="CHEBI:29105"/>
        <label>1</label>
    </ligand>
</feature>
<feature type="binding site" evidence="1">
    <location>
        <position position="206"/>
    </location>
    <ligand>
        <name>Zn(2+)</name>
        <dbReference type="ChEBI" id="CHEBI:29105"/>
        <label>1</label>
    </ligand>
</feature>
<reference key="1">
    <citation type="journal article" date="2008" name="Genome Res.">
        <title>Genome sequence of the beta-rhizobium Cupriavidus taiwanensis and comparative genomics of rhizobia.</title>
        <authorList>
            <person name="Amadou C."/>
            <person name="Pascal G."/>
            <person name="Mangenot S."/>
            <person name="Glew M."/>
            <person name="Bontemps C."/>
            <person name="Capela D."/>
            <person name="Carrere S."/>
            <person name="Cruveiller S."/>
            <person name="Dossat C."/>
            <person name="Lajus A."/>
            <person name="Marchetti M."/>
            <person name="Poinsot V."/>
            <person name="Rouy Z."/>
            <person name="Servin B."/>
            <person name="Saad M."/>
            <person name="Schenowitz C."/>
            <person name="Barbe V."/>
            <person name="Batut J."/>
            <person name="Medigue C."/>
            <person name="Masson-Boivin C."/>
        </authorList>
    </citation>
    <scope>NUCLEOTIDE SEQUENCE [LARGE SCALE GENOMIC DNA]</scope>
    <source>
        <strain>DSM 17343 / BCRC 17206 / CCUG 44338 / CIP 107171 / LMG 19424 / R1</strain>
    </source>
</reference>
<evidence type="ECO:0000255" key="1">
    <source>
        <dbReference type="HAMAP-Rule" id="MF_01152"/>
    </source>
</evidence>